<dbReference type="EC" id="3.6.1.27" evidence="1"/>
<dbReference type="EMBL" id="CP000747">
    <property type="protein sequence ID" value="ACG76580.1"/>
    <property type="molecule type" value="Genomic_DNA"/>
</dbReference>
<dbReference type="RefSeq" id="WP_012520728.1">
    <property type="nucleotide sequence ID" value="NC_011144.1"/>
</dbReference>
<dbReference type="SMR" id="B4RCI1"/>
<dbReference type="STRING" id="450851.PHZ_c0166"/>
<dbReference type="KEGG" id="pzu:PHZ_c0166"/>
<dbReference type="eggNOG" id="COG1968">
    <property type="taxonomic scope" value="Bacteria"/>
</dbReference>
<dbReference type="HOGENOM" id="CLU_060296_2_0_5"/>
<dbReference type="OrthoDB" id="9808289at2"/>
<dbReference type="Proteomes" id="UP000001868">
    <property type="component" value="Chromosome"/>
</dbReference>
<dbReference type="GO" id="GO:0005886">
    <property type="term" value="C:plasma membrane"/>
    <property type="evidence" value="ECO:0007669"/>
    <property type="project" value="UniProtKB-SubCell"/>
</dbReference>
<dbReference type="GO" id="GO:0050380">
    <property type="term" value="F:undecaprenyl-diphosphatase activity"/>
    <property type="evidence" value="ECO:0007669"/>
    <property type="project" value="UniProtKB-UniRule"/>
</dbReference>
<dbReference type="GO" id="GO:0071555">
    <property type="term" value="P:cell wall organization"/>
    <property type="evidence" value="ECO:0007669"/>
    <property type="project" value="UniProtKB-KW"/>
</dbReference>
<dbReference type="GO" id="GO:0009252">
    <property type="term" value="P:peptidoglycan biosynthetic process"/>
    <property type="evidence" value="ECO:0007669"/>
    <property type="project" value="UniProtKB-KW"/>
</dbReference>
<dbReference type="GO" id="GO:0008360">
    <property type="term" value="P:regulation of cell shape"/>
    <property type="evidence" value="ECO:0007669"/>
    <property type="project" value="UniProtKB-KW"/>
</dbReference>
<dbReference type="GO" id="GO:0046677">
    <property type="term" value="P:response to antibiotic"/>
    <property type="evidence" value="ECO:0007669"/>
    <property type="project" value="UniProtKB-UniRule"/>
</dbReference>
<dbReference type="HAMAP" id="MF_01006">
    <property type="entry name" value="Undec_diphosphatase"/>
    <property type="match status" value="1"/>
</dbReference>
<dbReference type="InterPro" id="IPR003824">
    <property type="entry name" value="UppP"/>
</dbReference>
<dbReference type="NCBIfam" id="NF001389">
    <property type="entry name" value="PRK00281.1-2"/>
    <property type="match status" value="1"/>
</dbReference>
<dbReference type="NCBIfam" id="NF001390">
    <property type="entry name" value="PRK00281.1-4"/>
    <property type="match status" value="1"/>
</dbReference>
<dbReference type="NCBIfam" id="TIGR00753">
    <property type="entry name" value="undec_PP_bacA"/>
    <property type="match status" value="1"/>
</dbReference>
<dbReference type="PANTHER" id="PTHR30622">
    <property type="entry name" value="UNDECAPRENYL-DIPHOSPHATASE"/>
    <property type="match status" value="1"/>
</dbReference>
<dbReference type="PANTHER" id="PTHR30622:SF3">
    <property type="entry name" value="UNDECAPRENYL-DIPHOSPHATASE"/>
    <property type="match status" value="1"/>
</dbReference>
<dbReference type="Pfam" id="PF02673">
    <property type="entry name" value="BacA"/>
    <property type="match status" value="1"/>
</dbReference>
<gene>
    <name evidence="1" type="primary">uppP</name>
    <name type="ordered locus">PHZ_c0166</name>
</gene>
<accession>B4RCI1</accession>
<comment type="function">
    <text evidence="1">Catalyzes the dephosphorylation of undecaprenyl diphosphate (UPP). Confers resistance to bacitracin.</text>
</comment>
<comment type="catalytic activity">
    <reaction evidence="1">
        <text>di-trans,octa-cis-undecaprenyl diphosphate + H2O = di-trans,octa-cis-undecaprenyl phosphate + phosphate + H(+)</text>
        <dbReference type="Rhea" id="RHEA:28094"/>
        <dbReference type="ChEBI" id="CHEBI:15377"/>
        <dbReference type="ChEBI" id="CHEBI:15378"/>
        <dbReference type="ChEBI" id="CHEBI:43474"/>
        <dbReference type="ChEBI" id="CHEBI:58405"/>
        <dbReference type="ChEBI" id="CHEBI:60392"/>
        <dbReference type="EC" id="3.6.1.27"/>
    </reaction>
</comment>
<comment type="subcellular location">
    <subcellularLocation>
        <location evidence="1">Cell inner membrane</location>
        <topology evidence="1">Multi-pass membrane protein</topology>
    </subcellularLocation>
</comment>
<comment type="miscellaneous">
    <text>Bacitracin is thought to be involved in the inhibition of peptidoglycan synthesis by sequestering undecaprenyl diphosphate, thereby reducing the pool of lipid carrier available.</text>
</comment>
<comment type="similarity">
    <text evidence="1">Belongs to the UppP family.</text>
</comment>
<feature type="chain" id="PRO_1000197387" description="Undecaprenyl-diphosphatase">
    <location>
        <begin position="1"/>
        <end position="266"/>
    </location>
</feature>
<feature type="transmembrane region" description="Helical" evidence="1">
    <location>
        <begin position="4"/>
        <end position="24"/>
    </location>
</feature>
<feature type="transmembrane region" description="Helical" evidence="1">
    <location>
        <begin position="41"/>
        <end position="61"/>
    </location>
</feature>
<feature type="transmembrane region" description="Helical" evidence="1">
    <location>
        <begin position="80"/>
        <end position="100"/>
    </location>
</feature>
<feature type="transmembrane region" description="Helical" evidence="1">
    <location>
        <begin position="105"/>
        <end position="125"/>
    </location>
</feature>
<feature type="transmembrane region" description="Helical" evidence="1">
    <location>
        <begin position="139"/>
        <end position="159"/>
    </location>
</feature>
<feature type="transmembrane region" description="Helical" evidence="1">
    <location>
        <begin position="182"/>
        <end position="202"/>
    </location>
</feature>
<feature type="transmembrane region" description="Helical" evidence="1">
    <location>
        <begin position="212"/>
        <end position="232"/>
    </location>
</feature>
<feature type="transmembrane region" description="Helical" evidence="1">
    <location>
        <begin position="245"/>
        <end position="265"/>
    </location>
</feature>
<sequence>MPDWVLAIILGVVEGLTEFIPVSSTGHILLLGHFLGFHSTGKVFEVMIQLGAILAVISVYFGRLWSVATHLHTDPAARRFVASIVLAFLPAGFAGFLLHDYIKAVLFETPAVICVSLILGGFALLAVDRIQREPVYTDAGAFPLKTAFIIGLFQCLALIPGVSRSGATVAGALLMRCDKRSAAEFSFFLAMPTMAGAFTVDLAKNYKLLSADDAGIIALGFVCALVAAIITVRKVVDFVGRHGFAPFAWWRIAVGALGLLGLAFIG</sequence>
<protein>
    <recommendedName>
        <fullName evidence="1">Undecaprenyl-diphosphatase</fullName>
        <ecNumber evidence="1">3.6.1.27</ecNumber>
    </recommendedName>
    <alternativeName>
        <fullName evidence="1">Bacitracin resistance protein</fullName>
    </alternativeName>
    <alternativeName>
        <fullName evidence="1">Undecaprenyl pyrophosphate phosphatase</fullName>
    </alternativeName>
</protein>
<evidence type="ECO:0000255" key="1">
    <source>
        <dbReference type="HAMAP-Rule" id="MF_01006"/>
    </source>
</evidence>
<organism>
    <name type="scientific">Phenylobacterium zucineum (strain HLK1)</name>
    <dbReference type="NCBI Taxonomy" id="450851"/>
    <lineage>
        <taxon>Bacteria</taxon>
        <taxon>Pseudomonadati</taxon>
        <taxon>Pseudomonadota</taxon>
        <taxon>Alphaproteobacteria</taxon>
        <taxon>Caulobacterales</taxon>
        <taxon>Caulobacteraceae</taxon>
        <taxon>Phenylobacterium</taxon>
    </lineage>
</organism>
<keyword id="KW-0046">Antibiotic resistance</keyword>
<keyword id="KW-0997">Cell inner membrane</keyword>
<keyword id="KW-1003">Cell membrane</keyword>
<keyword id="KW-0133">Cell shape</keyword>
<keyword id="KW-0961">Cell wall biogenesis/degradation</keyword>
<keyword id="KW-0378">Hydrolase</keyword>
<keyword id="KW-0472">Membrane</keyword>
<keyword id="KW-0573">Peptidoglycan synthesis</keyword>
<keyword id="KW-1185">Reference proteome</keyword>
<keyword id="KW-0812">Transmembrane</keyword>
<keyword id="KW-1133">Transmembrane helix</keyword>
<proteinExistence type="inferred from homology"/>
<reference key="1">
    <citation type="journal article" date="2008" name="BMC Genomics">
        <title>Complete genome of Phenylobacterium zucineum - a novel facultative intracellular bacterium isolated from human erythroleukemia cell line K562.</title>
        <authorList>
            <person name="Luo Y."/>
            <person name="Xu X."/>
            <person name="Ding Z."/>
            <person name="Liu Z."/>
            <person name="Zhang B."/>
            <person name="Yan Z."/>
            <person name="Sun J."/>
            <person name="Hu S."/>
            <person name="Hu X."/>
        </authorList>
    </citation>
    <scope>NUCLEOTIDE SEQUENCE [LARGE SCALE GENOMIC DNA]</scope>
    <source>
        <strain>HLK1</strain>
    </source>
</reference>
<name>UPPP_PHEZH</name>